<organism>
    <name type="scientific">Mus musculus</name>
    <name type="common">Mouse</name>
    <dbReference type="NCBI Taxonomy" id="10090"/>
    <lineage>
        <taxon>Eukaryota</taxon>
        <taxon>Metazoa</taxon>
        <taxon>Chordata</taxon>
        <taxon>Craniata</taxon>
        <taxon>Vertebrata</taxon>
        <taxon>Euteleostomi</taxon>
        <taxon>Mammalia</taxon>
        <taxon>Eutheria</taxon>
        <taxon>Euarchontoglires</taxon>
        <taxon>Glires</taxon>
        <taxon>Rodentia</taxon>
        <taxon>Myomorpha</taxon>
        <taxon>Muroidea</taxon>
        <taxon>Muridae</taxon>
        <taxon>Murinae</taxon>
        <taxon>Mus</taxon>
        <taxon>Mus</taxon>
    </lineage>
</organism>
<reference key="1">
    <citation type="journal article" date="2010" name="Dev. Cell">
        <title>Pitchfork regulates primary cilia disassembly and left-right asymmetry.</title>
        <authorList>
            <person name="Kinzel D."/>
            <person name="Boldt K."/>
            <person name="Davis E.E."/>
            <person name="Burtscher I."/>
            <person name="Trumbach D."/>
            <person name="Diplas B."/>
            <person name="Attie-Bitach T."/>
            <person name="Wurst W."/>
            <person name="Katsanis N."/>
            <person name="Ueffing M."/>
            <person name="Lickert H."/>
        </authorList>
    </citation>
    <scope>NUCLEOTIDE SEQUENCE [MRNA] (ISOFORMS 1 AND 2)</scope>
    <scope>FUNCTION</scope>
    <scope>ALTERNATIVE PROMOTER USAGE</scope>
    <scope>INTERACTION WITH ARL13B; AURKA; CETN1; KIF3A; RAB6A; RAB8A; TUBB1 AND TUBG1</scope>
    <scope>SUBCELLULAR LOCATION</scope>
    <scope>TISSUE SPECIFICITY</scope>
    <scope>DEVELOPMENTAL STAGE</scope>
</reference>
<reference key="2">
    <citation type="journal article" date="2005" name="Science">
        <title>The transcriptional landscape of the mammalian genome.</title>
        <authorList>
            <person name="Carninci P."/>
            <person name="Kasukawa T."/>
            <person name="Katayama S."/>
            <person name="Gough J."/>
            <person name="Frith M.C."/>
            <person name="Maeda N."/>
            <person name="Oyama R."/>
            <person name="Ravasi T."/>
            <person name="Lenhard B."/>
            <person name="Wells C."/>
            <person name="Kodzius R."/>
            <person name="Shimokawa K."/>
            <person name="Bajic V.B."/>
            <person name="Brenner S.E."/>
            <person name="Batalov S."/>
            <person name="Forrest A.R."/>
            <person name="Zavolan M."/>
            <person name="Davis M.J."/>
            <person name="Wilming L.G."/>
            <person name="Aidinis V."/>
            <person name="Allen J.E."/>
            <person name="Ambesi-Impiombato A."/>
            <person name="Apweiler R."/>
            <person name="Aturaliya R.N."/>
            <person name="Bailey T.L."/>
            <person name="Bansal M."/>
            <person name="Baxter L."/>
            <person name="Beisel K.W."/>
            <person name="Bersano T."/>
            <person name="Bono H."/>
            <person name="Chalk A.M."/>
            <person name="Chiu K.P."/>
            <person name="Choudhary V."/>
            <person name="Christoffels A."/>
            <person name="Clutterbuck D.R."/>
            <person name="Crowe M.L."/>
            <person name="Dalla E."/>
            <person name="Dalrymple B.P."/>
            <person name="de Bono B."/>
            <person name="Della Gatta G."/>
            <person name="di Bernardo D."/>
            <person name="Down T."/>
            <person name="Engstrom P."/>
            <person name="Fagiolini M."/>
            <person name="Faulkner G."/>
            <person name="Fletcher C.F."/>
            <person name="Fukushima T."/>
            <person name="Furuno M."/>
            <person name="Futaki S."/>
            <person name="Gariboldi M."/>
            <person name="Georgii-Hemming P."/>
            <person name="Gingeras T.R."/>
            <person name="Gojobori T."/>
            <person name="Green R.E."/>
            <person name="Gustincich S."/>
            <person name="Harbers M."/>
            <person name="Hayashi Y."/>
            <person name="Hensch T.K."/>
            <person name="Hirokawa N."/>
            <person name="Hill D."/>
            <person name="Huminiecki L."/>
            <person name="Iacono M."/>
            <person name="Ikeo K."/>
            <person name="Iwama A."/>
            <person name="Ishikawa T."/>
            <person name="Jakt M."/>
            <person name="Kanapin A."/>
            <person name="Katoh M."/>
            <person name="Kawasawa Y."/>
            <person name="Kelso J."/>
            <person name="Kitamura H."/>
            <person name="Kitano H."/>
            <person name="Kollias G."/>
            <person name="Krishnan S.P."/>
            <person name="Kruger A."/>
            <person name="Kummerfeld S.K."/>
            <person name="Kurochkin I.V."/>
            <person name="Lareau L.F."/>
            <person name="Lazarevic D."/>
            <person name="Lipovich L."/>
            <person name="Liu J."/>
            <person name="Liuni S."/>
            <person name="McWilliam S."/>
            <person name="Madan Babu M."/>
            <person name="Madera M."/>
            <person name="Marchionni L."/>
            <person name="Matsuda H."/>
            <person name="Matsuzawa S."/>
            <person name="Miki H."/>
            <person name="Mignone F."/>
            <person name="Miyake S."/>
            <person name="Morris K."/>
            <person name="Mottagui-Tabar S."/>
            <person name="Mulder N."/>
            <person name="Nakano N."/>
            <person name="Nakauchi H."/>
            <person name="Ng P."/>
            <person name="Nilsson R."/>
            <person name="Nishiguchi S."/>
            <person name="Nishikawa S."/>
            <person name="Nori F."/>
            <person name="Ohara O."/>
            <person name="Okazaki Y."/>
            <person name="Orlando V."/>
            <person name="Pang K.C."/>
            <person name="Pavan W.J."/>
            <person name="Pavesi G."/>
            <person name="Pesole G."/>
            <person name="Petrovsky N."/>
            <person name="Piazza S."/>
            <person name="Reed J."/>
            <person name="Reid J.F."/>
            <person name="Ring B.Z."/>
            <person name="Ringwald M."/>
            <person name="Rost B."/>
            <person name="Ruan Y."/>
            <person name="Salzberg S.L."/>
            <person name="Sandelin A."/>
            <person name="Schneider C."/>
            <person name="Schoenbach C."/>
            <person name="Sekiguchi K."/>
            <person name="Semple C.A."/>
            <person name="Seno S."/>
            <person name="Sessa L."/>
            <person name="Sheng Y."/>
            <person name="Shibata Y."/>
            <person name="Shimada H."/>
            <person name="Shimada K."/>
            <person name="Silva D."/>
            <person name="Sinclair B."/>
            <person name="Sperling S."/>
            <person name="Stupka E."/>
            <person name="Sugiura K."/>
            <person name="Sultana R."/>
            <person name="Takenaka Y."/>
            <person name="Taki K."/>
            <person name="Tammoja K."/>
            <person name="Tan S.L."/>
            <person name="Tang S."/>
            <person name="Taylor M.S."/>
            <person name="Tegner J."/>
            <person name="Teichmann S.A."/>
            <person name="Ueda H.R."/>
            <person name="van Nimwegen E."/>
            <person name="Verardo R."/>
            <person name="Wei C.L."/>
            <person name="Yagi K."/>
            <person name="Yamanishi H."/>
            <person name="Zabarovsky E."/>
            <person name="Zhu S."/>
            <person name="Zimmer A."/>
            <person name="Hide W."/>
            <person name="Bult C."/>
            <person name="Grimmond S.M."/>
            <person name="Teasdale R.D."/>
            <person name="Liu E.T."/>
            <person name="Brusic V."/>
            <person name="Quackenbush J."/>
            <person name="Wahlestedt C."/>
            <person name="Mattick J.S."/>
            <person name="Hume D.A."/>
            <person name="Kai C."/>
            <person name="Sasaki D."/>
            <person name="Tomaru Y."/>
            <person name="Fukuda S."/>
            <person name="Kanamori-Katayama M."/>
            <person name="Suzuki M."/>
            <person name="Aoki J."/>
            <person name="Arakawa T."/>
            <person name="Iida J."/>
            <person name="Imamura K."/>
            <person name="Itoh M."/>
            <person name="Kato T."/>
            <person name="Kawaji H."/>
            <person name="Kawagashira N."/>
            <person name="Kawashima T."/>
            <person name="Kojima M."/>
            <person name="Kondo S."/>
            <person name="Konno H."/>
            <person name="Nakano K."/>
            <person name="Ninomiya N."/>
            <person name="Nishio T."/>
            <person name="Okada M."/>
            <person name="Plessy C."/>
            <person name="Shibata K."/>
            <person name="Shiraki T."/>
            <person name="Suzuki S."/>
            <person name="Tagami M."/>
            <person name="Waki K."/>
            <person name="Watahiki A."/>
            <person name="Okamura-Oho Y."/>
            <person name="Suzuki H."/>
            <person name="Kawai J."/>
            <person name="Hayashizaki Y."/>
        </authorList>
    </citation>
    <scope>NUCLEOTIDE SEQUENCE [LARGE SCALE MRNA] (ISOFORM 1)</scope>
    <source>
        <strain>C57BL/6J</strain>
        <tissue>Testis</tissue>
    </source>
</reference>
<reference key="3">
    <citation type="submission" date="2005-09" db="EMBL/GenBank/DDBJ databases">
        <authorList>
            <person name="Mural R.J."/>
            <person name="Adams M.D."/>
            <person name="Myers E.W."/>
            <person name="Smith H.O."/>
            <person name="Venter J.C."/>
        </authorList>
    </citation>
    <scope>NUCLEOTIDE SEQUENCE [LARGE SCALE GENOMIC DNA]</scope>
</reference>
<reference key="4">
    <citation type="journal article" date="2004" name="Genome Res.">
        <title>The status, quality, and expansion of the NIH full-length cDNA project: the Mammalian Gene Collection (MGC).</title>
        <authorList>
            <consortium name="The MGC Project Team"/>
        </authorList>
    </citation>
    <scope>NUCLEOTIDE SEQUENCE [LARGE SCALE MRNA] (ISOFORM 2)</scope>
    <source>
        <tissue>Testis</tissue>
    </source>
</reference>
<accession>Q9D9W1</accession>
<accession>D9J0A0</accession>
<accession>D9J0A1</accession>
<accession>Q810M7</accession>
<comment type="function">
    <text evidence="1">During primary cilia disassembly, involved in cilia disassembly. Required specifically to control cilia retraction as well as the liberation and duplication of the basal body/centrosome. May act by stimulating AURKA activity at the basal body in a cell cycle-dependent manner.</text>
</comment>
<comment type="subunit">
    <text evidence="1">Interacts with proteins involved in ciliary transport, including ARL13B, CETN1, KIF3A, RAB6A, RAB8A, TUBB1 and TUBG1. Interacts with AURKA.</text>
</comment>
<comment type="subcellular location">
    <molecule>Isoform 1</molecule>
    <subcellularLocation>
        <location>Golgi apparatus</location>
        <location>Golgi stack</location>
    </subcellularLocation>
    <subcellularLocation>
        <location>Golgi apparatus</location>
        <location>trans-Golgi network</location>
    </subcellularLocation>
</comment>
<comment type="subcellular location">
    <molecule>Isoform 2</molecule>
    <subcellularLocation>
        <location>Nucleus</location>
    </subcellularLocation>
</comment>
<comment type="subcellular location">
    <subcellularLocation>
        <location evidence="1">Cytoplasm</location>
    </subcellularLocation>
    <subcellularLocation>
        <location evidence="1">Cytoplasmic vesicle</location>
    </subcellularLocation>
    <text evidence="1">Accumulates specifically at the basal body and ciliary necklace during the early steps of cilia assembly and disassembly, when structural, functional and regulatory proteins are delivered to cilia. At S phase, accumulates in vesicles and declines during mitosis. In node pit cells, found close to the ciliary membrane along the axoneme. In spermatocytes, localizes to particles along the stabilized microtubules of tails.</text>
</comment>
<comment type="alternative products">
    <event type="alternative promoter"/>
    <isoform>
        <id>Q9D9W1-1</id>
        <name>1</name>
        <sequence type="displayed"/>
    </isoform>
    <isoform>
        <id>Q9D9W1-2</id>
        <name>2</name>
        <sequence type="described" ref="VSP_024558"/>
    </isoform>
</comment>
<comment type="tissue specificity">
    <text evidence="1">Expressed in tissues rich in ciliated cells, such as lung, kidney, vas deferens and testis. Both isoforms 1 and 2 are expressed in testis.</text>
</comment>
<comment type="developmental stage">
    <text evidence="1">At 7.75 dpc, expression restricted to the ventral node monociliated pit cells. Not expressed in other tissues at detectable levels until 9.5 dpc. At 10.5 dpc, expressed in motor neurons in the ventral neural tube and in the apical ectodermal ridge of lim buds.</text>
</comment>
<evidence type="ECO:0000269" key="1">
    <source>
    </source>
</evidence>
<evidence type="ECO:0000303" key="2">
    <source>
    </source>
</evidence>
<evidence type="ECO:0000303" key="3">
    <source>
    </source>
</evidence>
<gene>
    <name type="primary">Cimap3</name>
    <name type="synonym">Pifo</name>
</gene>
<feature type="chain" id="PRO_0000284527" description="Ciliary microtubule-associated protein 3">
    <location>
        <begin position="1"/>
        <end position="207"/>
    </location>
</feature>
<feature type="splice variant" id="VSP_024558" description="In isoform 2." evidence="2 3">
    <original>MNTEEIPVAPPLRGVTPALQW</original>
    <variation>MKTENEEDVKPPESCHAMQLLFKSLEASERAKVEEELKKTKENEFTQRNEHHALRDITHG</variation>
    <location>
        <begin position="1"/>
        <end position="21"/>
    </location>
</feature>
<dbReference type="EMBL" id="HM237137">
    <property type="protein sequence ID" value="ADI86274.1"/>
    <property type="molecule type" value="mRNA"/>
</dbReference>
<dbReference type="EMBL" id="HM237138">
    <property type="protein sequence ID" value="ADI86275.1"/>
    <property type="molecule type" value="mRNA"/>
</dbReference>
<dbReference type="EMBL" id="AK006407">
    <property type="protein sequence ID" value="BAB24572.1"/>
    <property type="molecule type" value="mRNA"/>
</dbReference>
<dbReference type="EMBL" id="CH466608">
    <property type="protein sequence ID" value="EDL07534.1"/>
    <property type="molecule type" value="Genomic_DNA"/>
</dbReference>
<dbReference type="EMBL" id="BC049757">
    <property type="protein sequence ID" value="AAH49757.1"/>
    <property type="molecule type" value="mRNA"/>
</dbReference>
<dbReference type="CCDS" id="CCDS51037.1">
    <molecule id="Q9D9W1-1"/>
</dbReference>
<dbReference type="CCDS" id="CCDS51038.1">
    <molecule id="Q9D9W1-2"/>
</dbReference>
<dbReference type="RefSeq" id="NP_001186957.1">
    <molecule id="Q9D9W1-2"/>
    <property type="nucleotide sequence ID" value="NM_001200028.1"/>
</dbReference>
<dbReference type="RefSeq" id="NP_083880.2">
    <molecule id="Q9D9W1-1"/>
    <property type="nucleotide sequence ID" value="NM_029604.3"/>
</dbReference>
<dbReference type="BioGRID" id="218120">
    <property type="interactions" value="1"/>
</dbReference>
<dbReference type="FunCoup" id="Q9D9W1">
    <property type="interactions" value="177"/>
</dbReference>
<dbReference type="STRING" id="10090.ENSMUSP00000010280"/>
<dbReference type="GlyGen" id="Q9D9W1">
    <property type="glycosylation" value="1 site, 1 O-linked glycan (1 site)"/>
</dbReference>
<dbReference type="iPTMnet" id="Q9D9W1"/>
<dbReference type="PhosphoSitePlus" id="Q9D9W1"/>
<dbReference type="PaxDb" id="10090-ENSMUSP00000010280"/>
<dbReference type="ProteomicsDB" id="289572">
    <molecule id="Q9D9W1-1"/>
</dbReference>
<dbReference type="ProteomicsDB" id="289573">
    <molecule id="Q9D9W1-2"/>
</dbReference>
<dbReference type="Antibodypedia" id="53752">
    <property type="antibodies" value="6 antibodies from 5 providers"/>
</dbReference>
<dbReference type="Ensembl" id="ENSMUST00000010280.11">
    <molecule id="Q9D9W1-2"/>
    <property type="protein sequence ID" value="ENSMUSP00000010280.5"/>
    <property type="gene ID" value="ENSMUSG00000010136.15"/>
</dbReference>
<dbReference type="Ensembl" id="ENSMUST00000066319.8">
    <molecule id="Q9D9W1-1"/>
    <property type="protein sequence ID" value="ENSMUSP00000069454.7"/>
    <property type="gene ID" value="ENSMUSG00000010136.15"/>
</dbReference>
<dbReference type="GeneID" id="100503311"/>
<dbReference type="KEGG" id="mmu:100503311"/>
<dbReference type="UCSC" id="uc008qvr.1">
    <molecule id="Q9D9W1-1"/>
    <property type="organism name" value="mouse"/>
</dbReference>
<dbReference type="UCSC" id="uc008qvs.1">
    <molecule id="Q9D9W1-2"/>
    <property type="organism name" value="mouse"/>
</dbReference>
<dbReference type="AGR" id="MGI:1923670"/>
<dbReference type="CTD" id="128344"/>
<dbReference type="MGI" id="MGI:1923670">
    <property type="gene designation" value="Cimap3"/>
</dbReference>
<dbReference type="VEuPathDB" id="HostDB:ENSMUSG00000010136"/>
<dbReference type="eggNOG" id="ENOG502RZWF">
    <property type="taxonomic scope" value="Eukaryota"/>
</dbReference>
<dbReference type="GeneTree" id="ENSGT00390000001017"/>
<dbReference type="HOGENOM" id="CLU_098763_0_0_1"/>
<dbReference type="InParanoid" id="Q9D9W1"/>
<dbReference type="OMA" id="HRHVTWP"/>
<dbReference type="OrthoDB" id="22095at9989"/>
<dbReference type="TreeFam" id="TF328853"/>
<dbReference type="BioGRID-ORCS" id="100503311">
    <property type="hits" value="3 hits in 76 CRISPR screens"/>
</dbReference>
<dbReference type="ChiTaRS" id="Pifo">
    <property type="organism name" value="mouse"/>
</dbReference>
<dbReference type="PRO" id="PR:Q9D9W1"/>
<dbReference type="Proteomes" id="UP000000589">
    <property type="component" value="Chromosome 3"/>
</dbReference>
<dbReference type="RNAct" id="Q9D9W1">
    <property type="molecule type" value="protein"/>
</dbReference>
<dbReference type="Bgee" id="ENSMUSG00000010136">
    <property type="expression patterns" value="Expressed in olfactory epithelium and 56 other cell types or tissues"/>
</dbReference>
<dbReference type="GO" id="GO:0036064">
    <property type="term" value="C:ciliary basal body"/>
    <property type="evidence" value="ECO:0000314"/>
    <property type="project" value="MGI"/>
</dbReference>
<dbReference type="GO" id="GO:0005737">
    <property type="term" value="C:cytoplasm"/>
    <property type="evidence" value="ECO:0000314"/>
    <property type="project" value="MGI"/>
</dbReference>
<dbReference type="GO" id="GO:0031410">
    <property type="term" value="C:cytoplasmic vesicle"/>
    <property type="evidence" value="ECO:0007669"/>
    <property type="project" value="UniProtKB-KW"/>
</dbReference>
<dbReference type="GO" id="GO:0005795">
    <property type="term" value="C:Golgi stack"/>
    <property type="evidence" value="ECO:0007669"/>
    <property type="project" value="UniProtKB-SubCell"/>
</dbReference>
<dbReference type="GO" id="GO:0005634">
    <property type="term" value="C:nucleus"/>
    <property type="evidence" value="ECO:0000314"/>
    <property type="project" value="MGI"/>
</dbReference>
<dbReference type="GO" id="GO:0005802">
    <property type="term" value="C:trans-Golgi network"/>
    <property type="evidence" value="ECO:0000314"/>
    <property type="project" value="UniProtKB"/>
</dbReference>
<dbReference type="GO" id="GO:0048487">
    <property type="term" value="F:beta-tubulin binding"/>
    <property type="evidence" value="ECO:0000314"/>
    <property type="project" value="UniProtKB"/>
</dbReference>
<dbReference type="GO" id="GO:0043015">
    <property type="term" value="F:gamma-tubulin binding"/>
    <property type="evidence" value="ECO:0000314"/>
    <property type="project" value="UniProtKB"/>
</dbReference>
<dbReference type="GO" id="GO:0019894">
    <property type="term" value="F:kinesin binding"/>
    <property type="evidence" value="ECO:0000353"/>
    <property type="project" value="UniProtKB"/>
</dbReference>
<dbReference type="GO" id="GO:0019901">
    <property type="term" value="F:protein kinase binding"/>
    <property type="evidence" value="ECO:0000353"/>
    <property type="project" value="UniProtKB"/>
</dbReference>
<dbReference type="GO" id="GO:0031267">
    <property type="term" value="F:small GTPase binding"/>
    <property type="evidence" value="ECO:0000353"/>
    <property type="project" value="UniProtKB"/>
</dbReference>
<dbReference type="GO" id="GO:0044782">
    <property type="term" value="P:cilium organization"/>
    <property type="evidence" value="ECO:0000315"/>
    <property type="project" value="MGI"/>
</dbReference>
<dbReference type="GO" id="GO:0060971">
    <property type="term" value="P:embryonic heart tube left/right pattern formation"/>
    <property type="evidence" value="ECO:0000315"/>
    <property type="project" value="MGI"/>
</dbReference>
<dbReference type="GO" id="GO:0033674">
    <property type="term" value="P:positive regulation of kinase activity"/>
    <property type="evidence" value="ECO:0000250"/>
    <property type="project" value="UniProtKB"/>
</dbReference>
<dbReference type="GO" id="GO:0031344">
    <property type="term" value="P:regulation of cell projection organization"/>
    <property type="evidence" value="ECO:0000315"/>
    <property type="project" value="UniProtKB"/>
</dbReference>
<dbReference type="InterPro" id="IPR033602">
    <property type="entry name" value="CIMAP3"/>
</dbReference>
<dbReference type="InterPro" id="IPR010736">
    <property type="entry name" value="SHIPPO-rpt"/>
</dbReference>
<dbReference type="PANTHER" id="PTHR31508">
    <property type="entry name" value="PROTEIN PITCHFORK"/>
    <property type="match status" value="1"/>
</dbReference>
<dbReference type="PANTHER" id="PTHR31508:SF2">
    <property type="entry name" value="PROTEIN PITCHFORK"/>
    <property type="match status" value="1"/>
</dbReference>
<dbReference type="Pfam" id="PF07004">
    <property type="entry name" value="SHIPPO-rpt"/>
    <property type="match status" value="2"/>
</dbReference>
<proteinExistence type="evidence at protein level"/>
<protein>
    <recommendedName>
        <fullName>Ciliary microtubule-associated protein 3</fullName>
    </recommendedName>
    <alternativeName>
        <fullName>Protein pitchfork</fullName>
    </alternativeName>
</protein>
<sequence length="207" mass="23434">MNTEEIPVAPPLRGVTPALQWKVNNYSFGTRQARKLFPHYHPPTWLGNLYLPLRGMPHTGPGCYAAATDWNGLAYNLSKVPTSTKGYAIGARTAVRFKPISKDVTPYPGMYQKVDTLSEKHKKSFAPFNILMPRFRSAAKGDSYPGPGTYNPEMKSVPKVTWPMKFGSPDWSQVPCLEKRTLKAELSADKDFRKHRSRVAYFSLYYQ</sequence>
<keyword id="KW-0877">Alternative promoter usage</keyword>
<keyword id="KW-0970">Cilium biogenesis/degradation</keyword>
<keyword id="KW-0963">Cytoplasm</keyword>
<keyword id="KW-0968">Cytoplasmic vesicle</keyword>
<keyword id="KW-0333">Golgi apparatus</keyword>
<keyword id="KW-0539">Nucleus</keyword>
<keyword id="KW-1185">Reference proteome</keyword>
<name>CMAP3_MOUSE</name>